<protein>
    <recommendedName>
        <fullName>Carbonic anhydrase 4</fullName>
        <ecNumber evidence="3">4.2.1.1</ecNumber>
    </recommendedName>
    <alternativeName>
        <fullName>Carbonate dehydratase IV</fullName>
    </alternativeName>
    <alternativeName>
        <fullName>Carbonic anhydrase IV</fullName>
        <shortName>CA-IV</shortName>
    </alternativeName>
</protein>
<evidence type="ECO:0000250" key="1"/>
<evidence type="ECO:0000250" key="2">
    <source>
        <dbReference type="UniProtKB" id="P00918"/>
    </source>
</evidence>
<evidence type="ECO:0000250" key="3">
    <source>
        <dbReference type="UniProtKB" id="P22748"/>
    </source>
</evidence>
<evidence type="ECO:0000250" key="4">
    <source>
        <dbReference type="UniProtKB" id="Q64444"/>
    </source>
</evidence>
<evidence type="ECO:0000255" key="5"/>
<evidence type="ECO:0000255" key="6">
    <source>
        <dbReference type="PROSITE-ProRule" id="PRU01134"/>
    </source>
</evidence>
<evidence type="ECO:0000269" key="7">
    <source>
    </source>
</evidence>
<evidence type="ECO:0000305" key="8"/>
<evidence type="ECO:0007744" key="9">
    <source>
    </source>
</evidence>
<accession>P48284</accession>
<accession>Q4QR97</accession>
<sequence length="309" mass="35076">MQLLLALLALAYVAPSTEDSHWCYEIQAKEPNSHCSGPEQWTGDCKKNQQSPINIVTSKTKLNPSLTPFTFVGYDQKKKWEVKNNQHSVEMSLGEDIYIFGGDLPTQYKAIQLHLHWSEESNKGSEHSIDGKHFAMEMHVVHKKMTTGDKVQDSDSKDKIAVLAFMVEVGNEVNEGFQPLVEALSRLSKPFTNSTVSESCLQDMLPEKKKLSAYFRYQGSLTTPGCDETVIWTVFEEPIKIHKDQFLEFSKKLYYDQEQKLNMKDNVRPLQPLGNRQVFRSHASGRLLSLPLPTLLVPTLTCLVASFLH</sequence>
<gene>
    <name type="primary">Ca4</name>
</gene>
<name>CAH4_RAT</name>
<dbReference type="EC" id="4.2.1.1" evidence="3"/>
<dbReference type="EMBL" id="S68245">
    <property type="protein sequence ID" value="AAB29505.1"/>
    <property type="molecule type" value="mRNA"/>
</dbReference>
<dbReference type="EMBL" id="BC097329">
    <property type="protein sequence ID" value="AAH97329.1"/>
    <property type="molecule type" value="mRNA"/>
</dbReference>
<dbReference type="PIR" id="I51900">
    <property type="entry name" value="I51900"/>
</dbReference>
<dbReference type="RefSeq" id="NP_062047.1">
    <property type="nucleotide sequence ID" value="NM_019174.3"/>
</dbReference>
<dbReference type="SMR" id="P48284"/>
<dbReference type="BioGRID" id="247918">
    <property type="interactions" value="2"/>
</dbReference>
<dbReference type="FunCoup" id="P48284">
    <property type="interactions" value="98"/>
</dbReference>
<dbReference type="IntAct" id="P48284">
    <property type="interactions" value="1"/>
</dbReference>
<dbReference type="MINT" id="P48284"/>
<dbReference type="STRING" id="10116.ENSRNOP00000003908"/>
<dbReference type="GlyCosmos" id="P48284">
    <property type="glycosylation" value="1 site, 4 glycans"/>
</dbReference>
<dbReference type="GlyGen" id="P48284">
    <property type="glycosylation" value="1 site, 4 N-linked glycans (1 site)"/>
</dbReference>
<dbReference type="iPTMnet" id="P48284"/>
<dbReference type="PhosphoSitePlus" id="P48284"/>
<dbReference type="SwissPalm" id="P48284"/>
<dbReference type="PaxDb" id="10116-ENSRNOP00000003908"/>
<dbReference type="GeneID" id="29242"/>
<dbReference type="KEGG" id="rno:29242"/>
<dbReference type="AGR" id="RGD:2242"/>
<dbReference type="CTD" id="12351"/>
<dbReference type="RGD" id="2242">
    <property type="gene designation" value="Ca4"/>
</dbReference>
<dbReference type="eggNOG" id="KOG0382">
    <property type="taxonomic scope" value="Eukaryota"/>
</dbReference>
<dbReference type="HOGENOM" id="CLU_039326_2_0_1"/>
<dbReference type="InParanoid" id="P48284"/>
<dbReference type="OrthoDB" id="79946at9989"/>
<dbReference type="PhylomeDB" id="P48284"/>
<dbReference type="TreeFam" id="TF316425"/>
<dbReference type="Reactome" id="R-RNO-1237044">
    <property type="pathway name" value="Erythrocytes take up carbon dioxide and release oxygen"/>
</dbReference>
<dbReference type="Reactome" id="R-RNO-1247673">
    <property type="pathway name" value="Erythrocytes take up oxygen and release carbon dioxide"/>
</dbReference>
<dbReference type="Reactome" id="R-RNO-1475029">
    <property type="pathway name" value="Reversible hydration of carbon dioxide"/>
</dbReference>
<dbReference type="PRO" id="PR:P48284"/>
<dbReference type="Proteomes" id="UP000002494">
    <property type="component" value="Unplaced"/>
</dbReference>
<dbReference type="GO" id="GO:0016324">
    <property type="term" value="C:apical plasma membrane"/>
    <property type="evidence" value="ECO:0000314"/>
    <property type="project" value="RGD"/>
</dbReference>
<dbReference type="GO" id="GO:0031526">
    <property type="term" value="C:brush border membrane"/>
    <property type="evidence" value="ECO:0000266"/>
    <property type="project" value="RGD"/>
</dbReference>
<dbReference type="GO" id="GO:0009986">
    <property type="term" value="C:cell surface"/>
    <property type="evidence" value="ECO:0000266"/>
    <property type="project" value="RGD"/>
</dbReference>
<dbReference type="GO" id="GO:0005793">
    <property type="term" value="C:endoplasmic reticulum-Golgi intermediate compartment"/>
    <property type="evidence" value="ECO:0000266"/>
    <property type="project" value="RGD"/>
</dbReference>
<dbReference type="GO" id="GO:0009897">
    <property type="term" value="C:external side of plasma membrane"/>
    <property type="evidence" value="ECO:0000266"/>
    <property type="project" value="RGD"/>
</dbReference>
<dbReference type="GO" id="GO:0070062">
    <property type="term" value="C:extracellular exosome"/>
    <property type="evidence" value="ECO:0000266"/>
    <property type="project" value="RGD"/>
</dbReference>
<dbReference type="GO" id="GO:0005794">
    <property type="term" value="C:Golgi apparatus"/>
    <property type="evidence" value="ECO:0000266"/>
    <property type="project" value="RGD"/>
</dbReference>
<dbReference type="GO" id="GO:0016020">
    <property type="term" value="C:membrane"/>
    <property type="evidence" value="ECO:0000266"/>
    <property type="project" value="RGD"/>
</dbReference>
<dbReference type="GO" id="GO:0048471">
    <property type="term" value="C:perinuclear region of cytoplasm"/>
    <property type="evidence" value="ECO:0000266"/>
    <property type="project" value="RGD"/>
</dbReference>
<dbReference type="GO" id="GO:0005886">
    <property type="term" value="C:plasma membrane"/>
    <property type="evidence" value="ECO:0000266"/>
    <property type="project" value="RGD"/>
</dbReference>
<dbReference type="GO" id="GO:0005791">
    <property type="term" value="C:rough endoplasmic reticulum"/>
    <property type="evidence" value="ECO:0000266"/>
    <property type="project" value="RGD"/>
</dbReference>
<dbReference type="GO" id="GO:0042383">
    <property type="term" value="C:sarcolemma"/>
    <property type="evidence" value="ECO:0000314"/>
    <property type="project" value="RGD"/>
</dbReference>
<dbReference type="GO" id="GO:0016529">
    <property type="term" value="C:sarcoplasmic reticulum"/>
    <property type="evidence" value="ECO:0000314"/>
    <property type="project" value="RGD"/>
</dbReference>
<dbReference type="GO" id="GO:0030667">
    <property type="term" value="C:secretory granule membrane"/>
    <property type="evidence" value="ECO:0000266"/>
    <property type="project" value="RGD"/>
</dbReference>
<dbReference type="GO" id="GO:0005802">
    <property type="term" value="C:trans-Golgi network"/>
    <property type="evidence" value="ECO:0000266"/>
    <property type="project" value="RGD"/>
</dbReference>
<dbReference type="GO" id="GO:0030658">
    <property type="term" value="C:transport vesicle membrane"/>
    <property type="evidence" value="ECO:0000266"/>
    <property type="project" value="RGD"/>
</dbReference>
<dbReference type="GO" id="GO:0004089">
    <property type="term" value="F:carbonate dehydratase activity"/>
    <property type="evidence" value="ECO:0000314"/>
    <property type="project" value="RGD"/>
</dbReference>
<dbReference type="GO" id="GO:0008270">
    <property type="term" value="F:zinc ion binding"/>
    <property type="evidence" value="ECO:0007669"/>
    <property type="project" value="InterPro"/>
</dbReference>
<dbReference type="GO" id="GO:0015701">
    <property type="term" value="P:bicarbonate transport"/>
    <property type="evidence" value="ECO:0000266"/>
    <property type="project" value="RGD"/>
</dbReference>
<dbReference type="GO" id="GO:0048545">
    <property type="term" value="P:response to steroid hormone"/>
    <property type="evidence" value="ECO:0000270"/>
    <property type="project" value="RGD"/>
</dbReference>
<dbReference type="GO" id="GO:0009410">
    <property type="term" value="P:response to xenobiotic stimulus"/>
    <property type="evidence" value="ECO:0000270"/>
    <property type="project" value="RGD"/>
</dbReference>
<dbReference type="CDD" id="cd03117">
    <property type="entry name" value="alpha_CA_IV_XV_like"/>
    <property type="match status" value="1"/>
</dbReference>
<dbReference type="FunFam" id="3.10.200.10:FF:000003">
    <property type="entry name" value="Carbonic anhydrase 12"/>
    <property type="match status" value="1"/>
</dbReference>
<dbReference type="Gene3D" id="3.10.200.10">
    <property type="entry name" value="Alpha carbonic anhydrase"/>
    <property type="match status" value="1"/>
</dbReference>
<dbReference type="InterPro" id="IPR041874">
    <property type="entry name" value="CA4/CA15"/>
</dbReference>
<dbReference type="InterPro" id="IPR001148">
    <property type="entry name" value="CA_dom"/>
</dbReference>
<dbReference type="InterPro" id="IPR036398">
    <property type="entry name" value="CA_dom_sf"/>
</dbReference>
<dbReference type="InterPro" id="IPR023561">
    <property type="entry name" value="Carbonic_anhydrase_a-class"/>
</dbReference>
<dbReference type="InterPro" id="IPR018338">
    <property type="entry name" value="Carbonic_anhydrase_a-class_CS"/>
</dbReference>
<dbReference type="PANTHER" id="PTHR18952">
    <property type="entry name" value="CARBONIC ANHYDRASE"/>
    <property type="match status" value="1"/>
</dbReference>
<dbReference type="PANTHER" id="PTHR18952:SF95">
    <property type="entry name" value="CARBONIC ANHYDRASE 4"/>
    <property type="match status" value="1"/>
</dbReference>
<dbReference type="Pfam" id="PF00194">
    <property type="entry name" value="Carb_anhydrase"/>
    <property type="match status" value="1"/>
</dbReference>
<dbReference type="SMART" id="SM01057">
    <property type="entry name" value="Carb_anhydrase"/>
    <property type="match status" value="1"/>
</dbReference>
<dbReference type="SUPFAM" id="SSF51069">
    <property type="entry name" value="Carbonic anhydrase"/>
    <property type="match status" value="1"/>
</dbReference>
<dbReference type="PROSITE" id="PS00162">
    <property type="entry name" value="ALPHA_CA_1"/>
    <property type="match status" value="1"/>
</dbReference>
<dbReference type="PROSITE" id="PS51144">
    <property type="entry name" value="ALPHA_CA_2"/>
    <property type="match status" value="1"/>
</dbReference>
<comment type="function">
    <text evidence="3">Catalyzes the reversible hydration of carbon dioxide into bicarbonate and protons and thus is essential to maintaining intracellular and extracellular pH. May stimulate the sodium/bicarbonate transporter activity of SLC4A4 that acts in pH homeostasis. It is essential for acid overload removal from the retina and retina epithelium, and acid release in the choriocapillaris in the choroid.</text>
</comment>
<comment type="catalytic activity">
    <reaction evidence="3">
        <text>hydrogencarbonate + H(+) = CO2 + H2O</text>
        <dbReference type="Rhea" id="RHEA:10748"/>
        <dbReference type="ChEBI" id="CHEBI:15377"/>
        <dbReference type="ChEBI" id="CHEBI:15378"/>
        <dbReference type="ChEBI" id="CHEBI:16526"/>
        <dbReference type="ChEBI" id="CHEBI:17544"/>
        <dbReference type="EC" id="4.2.1.1"/>
    </reaction>
    <physiologicalReaction direction="left-to-right" evidence="3">
        <dbReference type="Rhea" id="RHEA:10749"/>
    </physiologicalReaction>
    <physiologicalReaction direction="right-to-left" evidence="3">
        <dbReference type="Rhea" id="RHEA:10750"/>
    </physiologicalReaction>
</comment>
<comment type="cofactor">
    <cofactor evidence="3">
        <name>Zn(2+)</name>
        <dbReference type="ChEBI" id="CHEBI:29105"/>
    </cofactor>
</comment>
<comment type="activity regulation">
    <text evidence="1">Inhibited by acetazolamide.</text>
</comment>
<comment type="subunit">
    <text evidence="3">Interacts with SLC4A4.</text>
</comment>
<comment type="subcellular location">
    <subcellularLocation>
        <location evidence="7">Cell membrane</location>
        <topology evidence="7">Lipid-anchor</topology>
        <topology evidence="7">GPI-anchor</topology>
    </subcellularLocation>
</comment>
<comment type="tissue specificity">
    <text evidence="7">Present in kidney and lung. Also particularly abundant in brain, muscle, heart and liver. Not detected in skin or spleen.</text>
</comment>
<comment type="PTM">
    <text>The N-terminus is blocked.</text>
</comment>
<comment type="PTM">
    <text evidence="7">Glycosylated.</text>
</comment>
<comment type="similarity">
    <text evidence="8">Belongs to the alpha-carbonic anhydrase family.</text>
</comment>
<organism>
    <name type="scientific">Rattus norvegicus</name>
    <name type="common">Rat</name>
    <dbReference type="NCBI Taxonomy" id="10116"/>
    <lineage>
        <taxon>Eukaryota</taxon>
        <taxon>Metazoa</taxon>
        <taxon>Chordata</taxon>
        <taxon>Craniata</taxon>
        <taxon>Vertebrata</taxon>
        <taxon>Euteleostomi</taxon>
        <taxon>Mammalia</taxon>
        <taxon>Eutheria</taxon>
        <taxon>Euarchontoglires</taxon>
        <taxon>Glires</taxon>
        <taxon>Rodentia</taxon>
        <taxon>Myomorpha</taxon>
        <taxon>Muroidea</taxon>
        <taxon>Muridae</taxon>
        <taxon>Murinae</taxon>
        <taxon>Rattus</taxon>
    </lineage>
</organism>
<proteinExistence type="evidence at protein level"/>
<feature type="signal peptide" evidence="5">
    <location>
        <begin position="1"/>
        <end position="17"/>
    </location>
</feature>
<feature type="chain" id="PRO_0000004232" description="Carbonic anhydrase 4">
    <location>
        <begin position="18"/>
        <end position="281"/>
    </location>
</feature>
<feature type="propeptide" id="PRO_0000004233" description="Removed in mature form" evidence="3">
    <location>
        <begin position="282"/>
        <end position="309"/>
    </location>
</feature>
<feature type="domain" description="Alpha-carbonic anhydrase" evidence="6">
    <location>
        <begin position="20"/>
        <end position="282"/>
    </location>
</feature>
<feature type="active site" description="Proton donor/acceptor" evidence="2">
    <location>
        <position position="87"/>
    </location>
</feature>
<feature type="binding site" evidence="4">
    <location>
        <position position="114"/>
    </location>
    <ligand>
        <name>Zn(2+)</name>
        <dbReference type="ChEBI" id="CHEBI:29105"/>
        <note>catalytic</note>
    </ligand>
</feature>
<feature type="binding site" evidence="4">
    <location>
        <position position="116"/>
    </location>
    <ligand>
        <name>Zn(2+)</name>
        <dbReference type="ChEBI" id="CHEBI:29105"/>
        <note>catalytic</note>
    </ligand>
</feature>
<feature type="binding site" evidence="4">
    <location>
        <position position="139"/>
    </location>
    <ligand>
        <name>Zn(2+)</name>
        <dbReference type="ChEBI" id="CHEBI:29105"/>
        <note>catalytic</note>
    </ligand>
</feature>
<feature type="binding site" evidence="2">
    <location>
        <begin position="222"/>
        <end position="223"/>
    </location>
    <ligand>
        <name>substrate</name>
    </ligand>
</feature>
<feature type="lipid moiety-binding region" description="GPI-anchor amidated serine" evidence="3">
    <location>
        <position position="281"/>
    </location>
</feature>
<feature type="glycosylation site" description="N-linked (GlcNAc...) asparagine" evidence="9">
    <location>
        <position position="193"/>
    </location>
</feature>
<feature type="disulfide bond" evidence="4">
    <location>
        <begin position="23"/>
        <end position="35"/>
    </location>
</feature>
<feature type="disulfide bond" evidence="4">
    <location>
        <begin position="45"/>
        <end position="226"/>
    </location>
</feature>
<keyword id="KW-1003">Cell membrane</keyword>
<keyword id="KW-0903">Direct protein sequencing</keyword>
<keyword id="KW-1015">Disulfide bond</keyword>
<keyword id="KW-0325">Glycoprotein</keyword>
<keyword id="KW-0336">GPI-anchor</keyword>
<keyword id="KW-0449">Lipoprotein</keyword>
<keyword id="KW-0456">Lyase</keyword>
<keyword id="KW-0472">Membrane</keyword>
<keyword id="KW-0479">Metal-binding</keyword>
<keyword id="KW-1185">Reference proteome</keyword>
<keyword id="KW-0732">Signal</keyword>
<keyword id="KW-0862">Zinc</keyword>
<reference key="1">
    <citation type="journal article" date="1993" name="Am. J. Physiol.">
        <title>Pulmonary carbonic anhydrase IV: developmental regulation and cell-specific expression in the capillary endothelium.</title>
        <authorList>
            <person name="Fleming R.E."/>
            <person name="Crouch E.C."/>
            <person name="Ruzicka C.A."/>
            <person name="Sly W.S."/>
        </authorList>
    </citation>
    <scope>NUCLEOTIDE SEQUENCE [MRNA]</scope>
    <source>
        <strain>Sprague-Dawley</strain>
        <tissue>Lung</tissue>
    </source>
</reference>
<reference key="2">
    <citation type="journal article" date="2004" name="Genome Res.">
        <title>The status, quality, and expansion of the NIH full-length cDNA project: the Mammalian Gene Collection (MGC).</title>
        <authorList>
            <consortium name="The MGC Project Team"/>
        </authorList>
    </citation>
    <scope>NUCLEOTIDE SEQUENCE [LARGE SCALE MRNA]</scope>
    <source>
        <tissue>Placenta</tissue>
    </source>
</reference>
<reference key="3">
    <citation type="journal article" date="1992" name="J. Biol. Chem.">
        <title>Membrane-associated carbonic anhydrase from rat lung. Purification, characterization, tissue distribution, and comparison with carbonic anhydrase IVs of other mammals.</title>
        <authorList>
            <person name="Waheed A."/>
            <person name="Zhu X.L."/>
            <person name="Sly W.S."/>
        </authorList>
    </citation>
    <scope>PROTEIN SEQUENCE OF 19-22; 24-33 AND 36-38</scope>
    <scope>TISSUE SPECIFICITY</scope>
    <scope>SUBCELLULAR LOCATION</scope>
    <scope>GLYCOSYLATION</scope>
    <source>
        <tissue>Lung</tissue>
    </source>
</reference>
<reference key="4">
    <citation type="journal article" date="2013" name="J. Proteome Res.">
        <title>Site-specific glycan-peptide analysis for determination of N-glycoproteome heterogeneity.</title>
        <authorList>
            <person name="Parker B.L."/>
            <person name="Thaysen-Andersen M."/>
            <person name="Solis N."/>
            <person name="Scott N.E."/>
            <person name="Larsen M.R."/>
            <person name="Graham M.E."/>
            <person name="Packer N.H."/>
            <person name="Cordwell S.J."/>
        </authorList>
    </citation>
    <scope>GLYCOSYLATION [LARGE SCALE ANALYSIS] AT ASN-193</scope>
    <scope>IDENTIFICATION BY MASS SPECTROMETRY [LARGE SCALE ANALYSIS]</scope>
    <source>
        <tissue>Brain</tissue>
    </source>
</reference>